<accession>A5W8E9</accession>
<proteinExistence type="inferred from homology"/>
<protein>
    <recommendedName>
        <fullName evidence="1">Pyridoxine 5'-phosphate synthase</fullName>
        <shortName evidence="1">PNP synthase</shortName>
        <ecNumber evidence="1">2.6.99.2</ecNumber>
    </recommendedName>
</protein>
<name>PDXJ_PSEP1</name>
<sequence length="240" mass="26011">MLLGVNIDHVATLRQARGTRYPDPVKAALDAEEAGADGITVHLREDRRHIQERDVVLLKDVLQTRMNFEMGVTEEMMAFAEKIRPAHICLVPETRQELTTEGGLDVAGQEARIKAAVERLARTGAEVSLFIDADERQIEASRRVGAPAIELHTGRYADAETPTEVAEELQRIVEGVAFGVGHGLIVNAGHGLHYHNVEAVAAIKGINELNIGHALVAHALFVGFKAAVAEMKALIVAASR</sequence>
<evidence type="ECO:0000255" key="1">
    <source>
        <dbReference type="HAMAP-Rule" id="MF_00279"/>
    </source>
</evidence>
<dbReference type="EC" id="2.6.99.2" evidence="1"/>
<dbReference type="EMBL" id="CP000712">
    <property type="protein sequence ID" value="ABQ80409.1"/>
    <property type="molecule type" value="Genomic_DNA"/>
</dbReference>
<dbReference type="SMR" id="A5W8E9"/>
<dbReference type="KEGG" id="ppf:Pput_4285"/>
<dbReference type="eggNOG" id="COG0854">
    <property type="taxonomic scope" value="Bacteria"/>
</dbReference>
<dbReference type="HOGENOM" id="CLU_074563_0_0_6"/>
<dbReference type="UniPathway" id="UPA00244">
    <property type="reaction ID" value="UER00313"/>
</dbReference>
<dbReference type="GO" id="GO:0005829">
    <property type="term" value="C:cytosol"/>
    <property type="evidence" value="ECO:0007669"/>
    <property type="project" value="TreeGrafter"/>
</dbReference>
<dbReference type="GO" id="GO:0033856">
    <property type="term" value="F:pyridoxine 5'-phosphate synthase activity"/>
    <property type="evidence" value="ECO:0007669"/>
    <property type="project" value="UniProtKB-EC"/>
</dbReference>
<dbReference type="GO" id="GO:0008615">
    <property type="term" value="P:pyridoxine biosynthetic process"/>
    <property type="evidence" value="ECO:0007669"/>
    <property type="project" value="UniProtKB-UniRule"/>
</dbReference>
<dbReference type="CDD" id="cd00003">
    <property type="entry name" value="PNPsynthase"/>
    <property type="match status" value="1"/>
</dbReference>
<dbReference type="FunFam" id="3.20.20.70:FF:000042">
    <property type="entry name" value="Pyridoxine 5'-phosphate synthase"/>
    <property type="match status" value="1"/>
</dbReference>
<dbReference type="Gene3D" id="3.20.20.70">
    <property type="entry name" value="Aldolase class I"/>
    <property type="match status" value="1"/>
</dbReference>
<dbReference type="HAMAP" id="MF_00279">
    <property type="entry name" value="PdxJ"/>
    <property type="match status" value="1"/>
</dbReference>
<dbReference type="InterPro" id="IPR013785">
    <property type="entry name" value="Aldolase_TIM"/>
</dbReference>
<dbReference type="InterPro" id="IPR004569">
    <property type="entry name" value="PyrdxlP_synth_PdxJ"/>
</dbReference>
<dbReference type="InterPro" id="IPR036130">
    <property type="entry name" value="Pyridoxine-5'_phos_synth"/>
</dbReference>
<dbReference type="NCBIfam" id="TIGR00559">
    <property type="entry name" value="pdxJ"/>
    <property type="match status" value="1"/>
</dbReference>
<dbReference type="NCBIfam" id="NF003623">
    <property type="entry name" value="PRK05265.1-1"/>
    <property type="match status" value="1"/>
</dbReference>
<dbReference type="NCBIfam" id="NF003625">
    <property type="entry name" value="PRK05265.1-3"/>
    <property type="match status" value="1"/>
</dbReference>
<dbReference type="NCBIfam" id="NF003627">
    <property type="entry name" value="PRK05265.1-5"/>
    <property type="match status" value="1"/>
</dbReference>
<dbReference type="PANTHER" id="PTHR30456">
    <property type="entry name" value="PYRIDOXINE 5'-PHOSPHATE SYNTHASE"/>
    <property type="match status" value="1"/>
</dbReference>
<dbReference type="PANTHER" id="PTHR30456:SF0">
    <property type="entry name" value="PYRIDOXINE 5'-PHOSPHATE SYNTHASE"/>
    <property type="match status" value="1"/>
</dbReference>
<dbReference type="Pfam" id="PF03740">
    <property type="entry name" value="PdxJ"/>
    <property type="match status" value="1"/>
</dbReference>
<dbReference type="SUPFAM" id="SSF63892">
    <property type="entry name" value="Pyridoxine 5'-phosphate synthase"/>
    <property type="match status" value="1"/>
</dbReference>
<comment type="function">
    <text evidence="1">Catalyzes the complicated ring closure reaction between the two acyclic compounds 1-deoxy-D-xylulose-5-phosphate (DXP) and 3-amino-2-oxopropyl phosphate (1-amino-acetone-3-phosphate or AAP) to form pyridoxine 5'-phosphate (PNP) and inorganic phosphate.</text>
</comment>
<comment type="catalytic activity">
    <reaction evidence="1">
        <text>3-amino-2-oxopropyl phosphate + 1-deoxy-D-xylulose 5-phosphate = pyridoxine 5'-phosphate + phosphate + 2 H2O + H(+)</text>
        <dbReference type="Rhea" id="RHEA:15265"/>
        <dbReference type="ChEBI" id="CHEBI:15377"/>
        <dbReference type="ChEBI" id="CHEBI:15378"/>
        <dbReference type="ChEBI" id="CHEBI:43474"/>
        <dbReference type="ChEBI" id="CHEBI:57279"/>
        <dbReference type="ChEBI" id="CHEBI:57792"/>
        <dbReference type="ChEBI" id="CHEBI:58589"/>
        <dbReference type="EC" id="2.6.99.2"/>
    </reaction>
</comment>
<comment type="pathway">
    <text evidence="1">Cofactor biosynthesis; pyridoxine 5'-phosphate biosynthesis; pyridoxine 5'-phosphate from D-erythrose 4-phosphate: step 5/5.</text>
</comment>
<comment type="subunit">
    <text evidence="1">Homooctamer; tetramer of dimers.</text>
</comment>
<comment type="subcellular location">
    <subcellularLocation>
        <location evidence="1">Cytoplasm</location>
    </subcellularLocation>
</comment>
<comment type="similarity">
    <text evidence="1">Belongs to the PNP synthase family.</text>
</comment>
<gene>
    <name evidence="1" type="primary">pdxJ</name>
    <name type="ordered locus">Pput_4285</name>
</gene>
<reference key="1">
    <citation type="submission" date="2007-05" db="EMBL/GenBank/DDBJ databases">
        <title>Complete sequence of Pseudomonas putida F1.</title>
        <authorList>
            <consortium name="US DOE Joint Genome Institute"/>
            <person name="Copeland A."/>
            <person name="Lucas S."/>
            <person name="Lapidus A."/>
            <person name="Barry K."/>
            <person name="Detter J.C."/>
            <person name="Glavina del Rio T."/>
            <person name="Hammon N."/>
            <person name="Israni S."/>
            <person name="Dalin E."/>
            <person name="Tice H."/>
            <person name="Pitluck S."/>
            <person name="Chain P."/>
            <person name="Malfatti S."/>
            <person name="Shin M."/>
            <person name="Vergez L."/>
            <person name="Schmutz J."/>
            <person name="Larimer F."/>
            <person name="Land M."/>
            <person name="Hauser L."/>
            <person name="Kyrpides N."/>
            <person name="Lykidis A."/>
            <person name="Parales R."/>
            <person name="Richardson P."/>
        </authorList>
    </citation>
    <scope>NUCLEOTIDE SEQUENCE [LARGE SCALE GENOMIC DNA]</scope>
    <source>
        <strain>ATCC 700007 / DSM 6899 / JCM 31910 / BCRC 17059 / LMG 24140 / F1</strain>
    </source>
</reference>
<organism>
    <name type="scientific">Pseudomonas putida (strain ATCC 700007 / DSM 6899 / JCM 31910 / BCRC 17059 / LMG 24140 / F1)</name>
    <dbReference type="NCBI Taxonomy" id="351746"/>
    <lineage>
        <taxon>Bacteria</taxon>
        <taxon>Pseudomonadati</taxon>
        <taxon>Pseudomonadota</taxon>
        <taxon>Gammaproteobacteria</taxon>
        <taxon>Pseudomonadales</taxon>
        <taxon>Pseudomonadaceae</taxon>
        <taxon>Pseudomonas</taxon>
    </lineage>
</organism>
<feature type="chain" id="PRO_1000022394" description="Pyridoxine 5'-phosphate synthase">
    <location>
        <begin position="1"/>
        <end position="240"/>
    </location>
</feature>
<feature type="active site" description="Proton acceptor" evidence="1">
    <location>
        <position position="42"/>
    </location>
</feature>
<feature type="active site" description="Proton acceptor" evidence="1">
    <location>
        <position position="69"/>
    </location>
</feature>
<feature type="active site" description="Proton donor" evidence="1">
    <location>
        <position position="190"/>
    </location>
</feature>
<feature type="binding site" evidence="1">
    <location>
        <position position="6"/>
    </location>
    <ligand>
        <name>3-amino-2-oxopropyl phosphate</name>
        <dbReference type="ChEBI" id="CHEBI:57279"/>
    </ligand>
</feature>
<feature type="binding site" evidence="1">
    <location>
        <begin position="8"/>
        <end position="9"/>
    </location>
    <ligand>
        <name>1-deoxy-D-xylulose 5-phosphate</name>
        <dbReference type="ChEBI" id="CHEBI:57792"/>
    </ligand>
</feature>
<feature type="binding site" evidence="1">
    <location>
        <position position="17"/>
    </location>
    <ligand>
        <name>3-amino-2-oxopropyl phosphate</name>
        <dbReference type="ChEBI" id="CHEBI:57279"/>
    </ligand>
</feature>
<feature type="binding site" evidence="1">
    <location>
        <position position="44"/>
    </location>
    <ligand>
        <name>1-deoxy-D-xylulose 5-phosphate</name>
        <dbReference type="ChEBI" id="CHEBI:57792"/>
    </ligand>
</feature>
<feature type="binding site" evidence="1">
    <location>
        <position position="49"/>
    </location>
    <ligand>
        <name>1-deoxy-D-xylulose 5-phosphate</name>
        <dbReference type="ChEBI" id="CHEBI:57792"/>
    </ligand>
</feature>
<feature type="binding site" evidence="1">
    <location>
        <position position="99"/>
    </location>
    <ligand>
        <name>1-deoxy-D-xylulose 5-phosphate</name>
        <dbReference type="ChEBI" id="CHEBI:57792"/>
    </ligand>
</feature>
<feature type="binding site" evidence="1">
    <location>
        <position position="191"/>
    </location>
    <ligand>
        <name>3-amino-2-oxopropyl phosphate</name>
        <dbReference type="ChEBI" id="CHEBI:57279"/>
    </ligand>
</feature>
<feature type="binding site" evidence="1">
    <location>
        <begin position="212"/>
        <end position="213"/>
    </location>
    <ligand>
        <name>3-amino-2-oxopropyl phosphate</name>
        <dbReference type="ChEBI" id="CHEBI:57279"/>
    </ligand>
</feature>
<feature type="site" description="Transition state stabilizer" evidence="1">
    <location>
        <position position="150"/>
    </location>
</feature>
<keyword id="KW-0963">Cytoplasm</keyword>
<keyword id="KW-0664">Pyridoxine biosynthesis</keyword>
<keyword id="KW-0808">Transferase</keyword>